<keyword id="KW-0325">Glycoprotein</keyword>
<keyword id="KW-1185">Reference proteome</keyword>
<keyword id="KW-0677">Repeat</keyword>
<keyword id="KW-0964">Secreted</keyword>
<keyword id="KW-0732">Signal</keyword>
<feature type="signal peptide" evidence="1">
    <location>
        <begin position="1"/>
        <end position="19"/>
    </location>
</feature>
<feature type="chain" id="PRO_0000363153" description="Colossin-B">
    <location>
        <begin position="20"/>
        <end position="3763"/>
    </location>
</feature>
<feature type="domain" description="Follistatin-like 1">
    <location>
        <begin position="619"/>
        <end position="643"/>
    </location>
</feature>
<feature type="domain" description="Follistatin-like 2">
    <location>
        <begin position="701"/>
        <end position="724"/>
    </location>
</feature>
<feature type="domain" description="Follistatin-like 3">
    <location>
        <begin position="729"/>
        <end position="752"/>
    </location>
</feature>
<feature type="domain" description="CNA-B 1">
    <location>
        <begin position="1159"/>
        <end position="1227"/>
    </location>
</feature>
<feature type="domain" description="CNA-B 2">
    <location>
        <begin position="1304"/>
        <end position="1373"/>
    </location>
</feature>
<feature type="domain" description="CNA-B 3">
    <location>
        <begin position="1437"/>
        <end position="1515"/>
    </location>
</feature>
<feature type="domain" description="CNA-B 4">
    <location>
        <begin position="1582"/>
        <end position="1648"/>
    </location>
</feature>
<feature type="domain" description="CNA-B 5">
    <location>
        <begin position="1731"/>
        <end position="1809"/>
    </location>
</feature>
<feature type="domain" description="CNA-B 6">
    <location>
        <begin position="2015"/>
        <end position="2083"/>
    </location>
</feature>
<feature type="domain" description="CNA-B 7">
    <location>
        <begin position="2143"/>
        <end position="2197"/>
    </location>
</feature>
<feature type="domain" description="CNA-B 8">
    <location>
        <begin position="2292"/>
        <end position="2345"/>
    </location>
</feature>
<feature type="domain" description="CNA-B 9">
    <location>
        <begin position="2453"/>
        <end position="2477"/>
    </location>
</feature>
<feature type="domain" description="CNA-B 10">
    <location>
        <begin position="2713"/>
        <end position="2766"/>
    </location>
</feature>
<feature type="domain" description="CNA-B 11">
    <location>
        <begin position="2984"/>
        <end position="3061"/>
    </location>
</feature>
<feature type="domain" description="CNA-B 12">
    <location>
        <begin position="3128"/>
        <end position="3201"/>
    </location>
</feature>
<feature type="domain" description="CNA-B 13">
    <location>
        <begin position="3664"/>
        <end position="3733"/>
    </location>
</feature>
<feature type="region of interest" description="Disordered" evidence="2">
    <location>
        <begin position="792"/>
        <end position="832"/>
    </location>
</feature>
<feature type="region of interest" description="Disordered" evidence="2">
    <location>
        <begin position="1033"/>
        <end position="1068"/>
    </location>
</feature>
<feature type="region of interest" description="Disordered" evidence="2">
    <location>
        <begin position="1095"/>
        <end position="1124"/>
    </location>
</feature>
<feature type="region of interest" description="Disordered" evidence="2">
    <location>
        <begin position="1883"/>
        <end position="1955"/>
    </location>
</feature>
<feature type="compositionally biased region" description="Low complexity" evidence="2">
    <location>
        <begin position="810"/>
        <end position="820"/>
    </location>
</feature>
<feature type="compositionally biased region" description="Gly residues" evidence="2">
    <location>
        <begin position="1036"/>
        <end position="1051"/>
    </location>
</feature>
<feature type="compositionally biased region" description="Low complexity" evidence="2">
    <location>
        <begin position="1052"/>
        <end position="1068"/>
    </location>
</feature>
<feature type="compositionally biased region" description="Low complexity" evidence="2">
    <location>
        <begin position="1099"/>
        <end position="1124"/>
    </location>
</feature>
<feature type="compositionally biased region" description="Low complexity" evidence="2">
    <location>
        <begin position="1898"/>
        <end position="1948"/>
    </location>
</feature>
<feature type="glycosylation site" description="N-linked (GlcNAc...) asparagine" evidence="1">
    <location>
        <position position="43"/>
    </location>
</feature>
<feature type="glycosylation site" description="N-linked (GlcNAc...) asparagine" evidence="1">
    <location>
        <position position="110"/>
    </location>
</feature>
<feature type="glycosylation site" description="N-linked (GlcNAc...) asparagine" evidence="1">
    <location>
        <position position="258"/>
    </location>
</feature>
<feature type="glycosylation site" description="N-linked (GlcNAc...) asparagine" evidence="1">
    <location>
        <position position="284"/>
    </location>
</feature>
<feature type="glycosylation site" description="N-linked (GlcNAc...) asparagine" evidence="1">
    <location>
        <position position="652"/>
    </location>
</feature>
<feature type="glycosylation site" description="N-linked (GlcNAc...) asparagine" evidence="1">
    <location>
        <position position="672"/>
    </location>
</feature>
<feature type="glycosylation site" description="N-linked (GlcNAc...) asparagine" evidence="1">
    <location>
        <position position="845"/>
    </location>
</feature>
<feature type="glycosylation site" description="N-linked (GlcNAc...) asparagine" evidence="1">
    <location>
        <position position="991"/>
    </location>
</feature>
<feature type="glycosylation site" description="N-linked (GlcNAc...) asparagine" evidence="1">
    <location>
        <position position="1054"/>
    </location>
</feature>
<feature type="glycosylation site" description="N-linked (GlcNAc...) asparagine" evidence="1">
    <location>
        <position position="1229"/>
    </location>
</feature>
<feature type="glycosylation site" description="N-linked (GlcNAc...) asparagine" evidence="1">
    <location>
        <position position="1247"/>
    </location>
</feature>
<feature type="glycosylation site" description="N-linked (GlcNAc...) asparagine" evidence="1">
    <location>
        <position position="1381"/>
    </location>
</feature>
<feature type="glycosylation site" description="N-linked (GlcNAc...) asparagine" evidence="1">
    <location>
        <position position="1769"/>
    </location>
</feature>
<feature type="glycosylation site" description="N-linked (GlcNAc...) asparagine" evidence="1">
    <location>
        <position position="1815"/>
    </location>
</feature>
<feature type="glycosylation site" description="N-linked (GlcNAc...) asparagine" evidence="1">
    <location>
        <position position="2128"/>
    </location>
</feature>
<feature type="glycosylation site" description="N-linked (GlcNAc...) asparagine" evidence="1">
    <location>
        <position position="2145"/>
    </location>
</feature>
<feature type="glycosylation site" description="N-linked (GlcNAc...) asparagine" evidence="1">
    <location>
        <position position="2243"/>
    </location>
</feature>
<feature type="glycosylation site" description="N-linked (GlcNAc...) asparagine" evidence="1">
    <location>
        <position position="2294"/>
    </location>
</feature>
<feature type="glycosylation site" description="N-linked (GlcNAc...) asparagine" evidence="1">
    <location>
        <position position="2351"/>
    </location>
</feature>
<feature type="glycosylation site" description="N-linked (GlcNAc...) asparagine" evidence="1">
    <location>
        <position position="2378"/>
    </location>
</feature>
<feature type="glycosylation site" description="N-linked (GlcNAc...) asparagine" evidence="1">
    <location>
        <position position="2453"/>
    </location>
</feature>
<feature type="glycosylation site" description="N-linked (GlcNAc...) asparagine" evidence="1">
    <location>
        <position position="2493"/>
    </location>
</feature>
<feature type="glycosylation site" description="N-linked (GlcNAc...) asparagine" evidence="1">
    <location>
        <position position="2496"/>
    </location>
</feature>
<feature type="glycosylation site" description="N-linked (GlcNAc...) asparagine" evidence="1">
    <location>
        <position position="2516"/>
    </location>
</feature>
<feature type="glycosylation site" description="N-linked (GlcNAc...) asparagine" evidence="1">
    <location>
        <position position="2572"/>
    </location>
</feature>
<feature type="glycosylation site" description="N-linked (GlcNAc...) asparagine" evidence="1">
    <location>
        <position position="2601"/>
    </location>
</feature>
<feature type="glycosylation site" description="N-linked (GlcNAc...) asparagine" evidence="1">
    <location>
        <position position="2624"/>
    </location>
</feature>
<feature type="glycosylation site" description="N-linked (GlcNAc...) asparagine" evidence="1">
    <location>
        <position position="2668"/>
    </location>
</feature>
<feature type="glycosylation site" description="N-linked (GlcNAc...) asparagine" evidence="1">
    <location>
        <position position="2698"/>
    </location>
</feature>
<feature type="glycosylation site" description="N-linked (GlcNAc...) asparagine" evidence="1">
    <location>
        <position position="2714"/>
    </location>
</feature>
<feature type="glycosylation site" description="N-linked (GlcNAc...) asparagine" evidence="1">
    <location>
        <position position="2781"/>
    </location>
</feature>
<feature type="glycosylation site" description="N-linked (GlcNAc...) asparagine" evidence="1">
    <location>
        <position position="2787"/>
    </location>
</feature>
<feature type="glycosylation site" description="N-linked (GlcNAc...) asparagine" evidence="1">
    <location>
        <position position="2800"/>
    </location>
</feature>
<feature type="glycosylation site" description="N-linked (GlcNAc...) asparagine" evidence="1">
    <location>
        <position position="2838"/>
    </location>
</feature>
<feature type="glycosylation site" description="N-linked (GlcNAc...) asparagine" evidence="1">
    <location>
        <position position="2858"/>
    </location>
</feature>
<feature type="glycosylation site" description="N-linked (GlcNAc...) asparagine" evidence="1">
    <location>
        <position position="3083"/>
    </location>
</feature>
<feature type="glycosylation site" description="N-linked (GlcNAc...) asparagine" evidence="1">
    <location>
        <position position="3130"/>
    </location>
</feature>
<feature type="glycosylation site" description="N-linked (GlcNAc...) asparagine" evidence="1">
    <location>
        <position position="3372"/>
    </location>
</feature>
<feature type="glycosylation site" description="N-linked (GlcNAc...) asparagine" evidence="1">
    <location>
        <position position="3390"/>
    </location>
</feature>
<feature type="glycosylation site" description="N-linked (GlcNAc...) asparagine" evidence="1">
    <location>
        <position position="3459"/>
    </location>
</feature>
<feature type="glycosylation site" description="N-linked (GlcNAc...) asparagine" evidence="1">
    <location>
        <position position="3466"/>
    </location>
</feature>
<feature type="glycosylation site" description="N-linked (GlcNAc...) asparagine" evidence="1">
    <location>
        <position position="3557"/>
    </location>
</feature>
<feature type="glycosylation site" description="N-linked (GlcNAc...) asparagine" evidence="1">
    <location>
        <position position="3666"/>
    </location>
</feature>
<feature type="glycosylation site" description="N-linked (GlcNAc...) asparagine" evidence="1">
    <location>
        <position position="3676"/>
    </location>
</feature>
<feature type="glycosylation site" description="N-linked (GlcNAc...) asparagine" evidence="1">
    <location>
        <position position="3681"/>
    </location>
</feature>
<name>COLB_DICDI</name>
<dbReference type="EMBL" id="AAFI02000012">
    <property type="protein sequence ID" value="EAL70003.1"/>
    <property type="molecule type" value="Genomic_DNA"/>
</dbReference>
<dbReference type="RefSeq" id="XP_644251.1">
    <property type="nucleotide sequence ID" value="XM_639159.1"/>
</dbReference>
<dbReference type="SMR" id="Q8T2A1"/>
<dbReference type="STRING" id="44689.Q8T2A1"/>
<dbReference type="GlyCosmos" id="Q8T2A1">
    <property type="glycosylation" value="45 sites, No reported glycans"/>
</dbReference>
<dbReference type="GlyGen" id="Q8T2A1">
    <property type="glycosylation" value="51 sites"/>
</dbReference>
<dbReference type="PaxDb" id="44689-DDB0237871"/>
<dbReference type="EnsemblProtists" id="EAL70003">
    <property type="protein sequence ID" value="EAL70003"/>
    <property type="gene ID" value="DDB_G0274221"/>
</dbReference>
<dbReference type="GeneID" id="8619679"/>
<dbReference type="KEGG" id="ddi:DDB_G0274221"/>
<dbReference type="dictyBase" id="DDB_G0274221">
    <property type="gene designation" value="colB"/>
</dbReference>
<dbReference type="VEuPathDB" id="AmoebaDB:DDB_G0274221"/>
<dbReference type="eggNOG" id="KOG1217">
    <property type="taxonomic scope" value="Eukaryota"/>
</dbReference>
<dbReference type="HOGENOM" id="CLU_224371_0_0_1"/>
<dbReference type="InParanoid" id="Q8T2A1"/>
<dbReference type="OMA" id="YIGNYVW"/>
<dbReference type="PhylomeDB" id="Q8T2A1"/>
<dbReference type="PRO" id="PR:Q8T2A1"/>
<dbReference type="Proteomes" id="UP000002195">
    <property type="component" value="Chromosome 2"/>
</dbReference>
<dbReference type="GO" id="GO:0005576">
    <property type="term" value="C:extracellular region"/>
    <property type="evidence" value="ECO:0007669"/>
    <property type="project" value="UniProtKB-SubCell"/>
</dbReference>
<dbReference type="GO" id="GO:0031160">
    <property type="term" value="C:spore wall"/>
    <property type="evidence" value="ECO:0007669"/>
    <property type="project" value="UniProtKB-ARBA"/>
</dbReference>
<dbReference type="GO" id="GO:0030435">
    <property type="term" value="P:sporulation resulting in formation of a cellular spore"/>
    <property type="evidence" value="ECO:0007669"/>
    <property type="project" value="UniProtKB-ARBA"/>
</dbReference>
<dbReference type="Gene3D" id="2.60.40.10">
    <property type="entry name" value="Immunoglobulins"/>
    <property type="match status" value="15"/>
</dbReference>
<dbReference type="InterPro" id="IPR003645">
    <property type="entry name" value="Fol_N"/>
</dbReference>
<dbReference type="InterPro" id="IPR013783">
    <property type="entry name" value="Ig-like_fold"/>
</dbReference>
<dbReference type="InterPro" id="IPR033764">
    <property type="entry name" value="Sdr_B"/>
</dbReference>
<dbReference type="PANTHER" id="PTHR36108">
    <property type="entry name" value="COLOSSIN-B-RELATED"/>
    <property type="match status" value="1"/>
</dbReference>
<dbReference type="PANTHER" id="PTHR36108:SF13">
    <property type="entry name" value="COLOSSIN-B-RELATED"/>
    <property type="match status" value="1"/>
</dbReference>
<dbReference type="Pfam" id="PF17210">
    <property type="entry name" value="SdrD_B"/>
    <property type="match status" value="14"/>
</dbReference>
<dbReference type="SMART" id="SM00274">
    <property type="entry name" value="FOLN"/>
    <property type="match status" value="3"/>
</dbReference>
<dbReference type="SUPFAM" id="SSF117074">
    <property type="entry name" value="Hypothetical protein PA1324"/>
    <property type="match status" value="15"/>
</dbReference>
<evidence type="ECO:0000255" key="1"/>
<evidence type="ECO:0000256" key="2">
    <source>
        <dbReference type="SAM" id="MobiDB-lite"/>
    </source>
</evidence>
<evidence type="ECO:0000305" key="3"/>
<accession>Q8T2A1</accession>
<accession>Q554S2</accession>
<sequence length="3763" mass="416946">MKGSIFLLFIFQIFKFSSSYSHYPHKNQFSFYSPTSLSFTSSNFSSGSGSGSGGASGSGGGGNIGNKYNNENNKINEEIIISCIYDDYLNFQYQDLSKINGILINGFNKNSTSDIFVKNVNSQYYDQSDSSNNFHYFDQENNNLSPQSQLNKECPFNLKNPIPTFSNSRYSIKIDKSFDVSDEITLVSKNNFLNSNSISKLKFKVYIPNKITNKIKIQLINSLTGNNGPKIPLLNTIENNYLKPFPCHQWLDAFILFNETNYYNNNNNNNYPIFYNGLKITSSNRSLDNTWIDEVYIDEIKLISNNNKHNSNKNDRKRNIDQTNEIYDKININNNNYNIRKLFSILDDNNNNNNNNNNNNNNNNNNEIINSYNTINSRADIALGGNSDDQSDISYSIICNKHMNELNNEIKWRFEEGSSSSLVETANGNLILEGSIHSISKHQADYNFNCKTNWKIRIEFSPIIDDYQYNGRMELASFAYTKNGGPIDTLYWKYYKFVNGYLSGLDCNQGKLIQINNNNNHNENNNGILQIGIGANNKNGRFGLSVYGLQLSIDNDNTFNINVDLNNQNNHLSNNNNKNNNNNNNNEVLECNCPIGFICLNDGTCKLNFQNDVDEEYIDCSTLQCPSGYECKLDKNSKTRGCIEQIGPQNLNQTNKCLGNLKCPDGFGCWHNSTDNTLNCKQYNNHKFDTNVIDSEKHRHHCRNVDCPKSHYCKIQRNGLPRCFPKVNPCEFVSCDCNLECRVTSCGDAKCFAPEECCEGKACMDTRNYRCVKINGVDECVRIPPLKPLPPPPIFYETPSPTSAPPTETPSPTDTPTDKPTIPPTPTPTPSKEITDCSQVICQVNYTCFDIQKGVGPFTPVCIPINYCDEYTTRFDLQGYVWLDDNENGYRDVNENGVETEPIGVEGIFCNLVFSTDHSPARNHYGDIIPVSVTNLDGFFSFNDVVPGSYVIDFYNIKGYHWTLPFNRYFKNSNWVNSDGTSLPFELPQYNVSNPNFIISPQSNLISKSITLPQPIFSTNAIVTVNNDGFDELGSSGSGSSGNSGSSGSGGSSNDSTESQWSSESESSASLITPSNICQTHFTVSNILAGLIVGPQPTPSTDIPTTTTTTTSTSTTGPIEPTSTPTPIVDVIDYYGIGKQVFIDFNNNGIFDSGIDRPVSGVEITLIQKGFRAYNHKGDKVPTIKTDTNGFYFFDALAPGVYRVSLNNLPPHGYTNSLLNKYPIDTSSNTSAQFIVYYRVKDNIKYNASDYPLASSNIKPKLAQYINSYVDFALVPINPPIAVGDTVYFDSNQNGKQDPFEKGIKGIQVTLKDLKNGYEYKTITDDNGKYLFDQMIESDNYQLQFSVPNGFQVVDHPNSIKNGVYTMDTFQLSSSTTPPTNASLTKGVVGNKKVNSAYFDDSKDVPLYFENSYAIGHQAFIDTNLDGLYKNDLDKPLPGVEVTLVNAASPSTPITNILGQIVRTVITDAKGFYQFDFLKPNNYIVQFKPPTGFKVTKPPPNTATYPELGSLIDTKSFKTPSLDIVTLSKPKNIEYIRLNVQASNIFESVNAGFYIPPTFSIGHRVWYDTNADGIMDPTEEGVPGIVVSLYTDKSEPAYDINDNLIIPTITDSKGFYLLTKIPTGNYFISFSNLPKGYTWTKQNVLTLDSVGYDSRPNVFTGYTSLFEMSTTSQLVRTTVPSDNSPDFYINPIENAGIIKGNRGLVIKYAVGRYIFYDDNRNGILDDYENGVGGVIVQIFTSAGKPALDFNGKVIPPAVTDSTGRYIIDNLSQGDYIIQFSNIPNGYNFENLPPPYPNYLNGRIGTFTLSPSSSINTTNVIKKFNPPKPNGGKKVSFSHSINQKSRKLLNDGIIGQDTSVDLSNVIAGGSTVDGVDIPNVIAGGSTVDGGTSVNGGTGSTSTTTVSSSPSSSSDIGSSSDISSEVSSSLSSSPSSSEQPSEQSSSSSEQPPEDSMEEYPVHYYEPVFETTPGSYPLDSIKAERTDLTRNAAIVRAAPYAFGQKVFFIDNNGNEVGVPDVTVTLVNSNGFPVTSINGVNMVPTKTDSKGSYRFNLLRAGSYHVEFSNIPIGFSFFDPLSGKIDFNLVNTDPNVRGAIPADKVPKATYYDQHVNLQLNPPFIFAIGTRVWNDTNKNGLYEIAEPVFPNITVRLFDQNLQPVLDNFNIQVEPTVTNALGQYYFDNLHSGSYIVKFEVPTRYYFAPQLKSIENSNGVGVNSKPNSQGYTSVISLSPDSLVEAPPSDFNFTIRSLVGNFHIDAGLIYDENYVKSYAVGRYVFYDLNDNGIMDSGEMGVPNVTVEIFNPTGQQVYNINELLIGSTTTDSNGYYLFDEIQPGSYIIKFSNIPNDLMFGNKTKPNSNTGLTEPFLLFPKEPAIRLVNSTTDVGVKAQAVDFTENAGLIKKVTFAIGHYVWYDINSNGLQDYPNEPPAYGVPLRLLKCNLIGITYDTCFTVINTTTTDQNGLYYFDNLSPGLYKLLFMNQQGIFETTTPFAGNGTNDSKAIDEAITGIRLSIYTKNVTKTDSNLDPMIKAPFIDRTLNVGILKPPMFSIGHKVWYDTNKNGKIDLKEQPAPNVTIYLKRAKEVNFEYSFDLYGKPMIAKTNETGDYWINNIPPGLYIAKFFPPNDTRFTIQMNDNSANVFGSSYAIYLFYKVPGIHPYNLKVDIGAVNASYVYSKVNAGLLKGLVDIRLYAVSGYVYNDTNSNGIRDPGENGVNGTIVTLLDINGNTMVDADSYPINSYTTGPDGYYKFDDFSFGKYIITFSGVPDLIYQFYKPDDQQHLNHSTLSNITIWSPDNPMVVNATLSDHVNAQYILREQNKGIIRVITYAIGGKVIPDFKNTTYKDSGYAGGAVIVQLYRNNSIATDLRGNPIPSVLTNVLTGEYLFDNVPILEGYQVMFSSPPPGWIFEKYRITQTPFIQLDLLPSFNLPKSNPKLIDKKLYPNIFATYGVLDQDTIISPTLFGIGKNTFIDVENSGLESIPLIPLGGVVVTLYNSVFERVFDAFGNLVKEKTTGEDGEYSFEDLYSGQYIVHFGLVEGYSFTQQYAGTDPEIDSNASPVDGYSEIIQLDSMNNELILIPLESRNNTLFCDPTIDGGYVSLSPQGFISGMTYIDYNADGVFTPNSRDKPYPNITVSIYTGDDSRLVATAQTDKKGFYSFSHLFISTQYQVVFSGIPQGYYTSFQADTVQFPIATKTGVNLGIIKPLEYCQDDIKIITTCFVRGDSNDDLPAVVQFPYTAYSDLNGDNGQKVDLVTMSETKTVYGLGYDRKENTIYLSPYKKQFSSLNSKTSSTIFKKSLSTGALSAYVNLATVLGFDFLAPNGKVYGDSQTYRVLFGDLDIIGDYIWVTNLYRNIVVKIPLRQTPTRENIKLVNITHNCGPDPFRIFGLGYNGSNVFVGGVCEGSVSKDIRNVIGVIKVISSDETSFSDVLTIPMNYPRGRLQTRIMFLNDMTPIFSSVQNSTWQVWNDTVGSFKPQPQITDITFIGDGGNMVISMKDREADSQSVTPAGDILMACKDSNGVYQLESAGVCGGLIGTNPISIGTMIEQGPGGGEFFDDNFSDRDWQHDETTWGSSYYLPGSGEVIGGAYDLLSTNEAIVKHWSVYNGRVLYGFILIHGAGLDYVFNKVNGLGDMDANCRLPNTYIGNYVWYDLNKNGLQDPNEKGMANITVQLFSAANSTFINSTLTDSSGNYNFQVISEFKYRVHFVAPKGFTYSPIVTVSSDPNDKRDLEKINSLPDSKGDAYFFANGNGENTQDIDCGFIRI</sequence>
<protein>
    <recommendedName>
        <fullName>Colossin-B</fullName>
    </recommendedName>
</protein>
<comment type="subcellular location">
    <subcellularLocation>
        <location evidence="3">Secreted</location>
    </subcellularLocation>
</comment>
<comment type="similarity">
    <text evidence="3">Belongs to the serine-aspartate repeat-containing protein (SDr) family.</text>
</comment>
<organism>
    <name type="scientific">Dictyostelium discoideum</name>
    <name type="common">Social amoeba</name>
    <dbReference type="NCBI Taxonomy" id="44689"/>
    <lineage>
        <taxon>Eukaryota</taxon>
        <taxon>Amoebozoa</taxon>
        <taxon>Evosea</taxon>
        <taxon>Eumycetozoa</taxon>
        <taxon>Dictyostelia</taxon>
        <taxon>Dictyosteliales</taxon>
        <taxon>Dictyosteliaceae</taxon>
        <taxon>Dictyostelium</taxon>
    </lineage>
</organism>
<proteinExistence type="inferred from homology"/>
<gene>
    <name type="primary">colB</name>
    <name type="ORF">DDB_G0274221</name>
</gene>
<reference key="1">
    <citation type="journal article" date="2002" name="Nature">
        <title>Sequence and analysis of chromosome 2 of Dictyostelium discoideum.</title>
        <authorList>
            <person name="Gloeckner G."/>
            <person name="Eichinger L."/>
            <person name="Szafranski K."/>
            <person name="Pachebat J.A."/>
            <person name="Bankier A.T."/>
            <person name="Dear P.H."/>
            <person name="Lehmann R."/>
            <person name="Baumgart C."/>
            <person name="Parra G."/>
            <person name="Abril J.F."/>
            <person name="Guigo R."/>
            <person name="Kumpf K."/>
            <person name="Tunggal B."/>
            <person name="Cox E.C."/>
            <person name="Quail M.A."/>
            <person name="Platzer M."/>
            <person name="Rosenthal A."/>
            <person name="Noegel A.A."/>
        </authorList>
    </citation>
    <scope>NUCLEOTIDE SEQUENCE [LARGE SCALE GENOMIC DNA]</scope>
    <source>
        <strain>AX4</strain>
    </source>
</reference>
<reference key="2">
    <citation type="journal article" date="2005" name="Nature">
        <title>The genome of the social amoeba Dictyostelium discoideum.</title>
        <authorList>
            <person name="Eichinger L."/>
            <person name="Pachebat J.A."/>
            <person name="Gloeckner G."/>
            <person name="Rajandream M.A."/>
            <person name="Sucgang R."/>
            <person name="Berriman M."/>
            <person name="Song J."/>
            <person name="Olsen R."/>
            <person name="Szafranski K."/>
            <person name="Xu Q."/>
            <person name="Tunggal B."/>
            <person name="Kummerfeld S."/>
            <person name="Madera M."/>
            <person name="Konfortov B.A."/>
            <person name="Rivero F."/>
            <person name="Bankier A.T."/>
            <person name="Lehmann R."/>
            <person name="Hamlin N."/>
            <person name="Davies R."/>
            <person name="Gaudet P."/>
            <person name="Fey P."/>
            <person name="Pilcher K."/>
            <person name="Chen G."/>
            <person name="Saunders D."/>
            <person name="Sodergren E.J."/>
            <person name="Davis P."/>
            <person name="Kerhornou A."/>
            <person name="Nie X."/>
            <person name="Hall N."/>
            <person name="Anjard C."/>
            <person name="Hemphill L."/>
            <person name="Bason N."/>
            <person name="Farbrother P."/>
            <person name="Desany B."/>
            <person name="Just E."/>
            <person name="Morio T."/>
            <person name="Rost R."/>
            <person name="Churcher C.M."/>
            <person name="Cooper J."/>
            <person name="Haydock S."/>
            <person name="van Driessche N."/>
            <person name="Cronin A."/>
            <person name="Goodhead I."/>
            <person name="Muzny D.M."/>
            <person name="Mourier T."/>
            <person name="Pain A."/>
            <person name="Lu M."/>
            <person name="Harper D."/>
            <person name="Lindsay R."/>
            <person name="Hauser H."/>
            <person name="James K.D."/>
            <person name="Quiles M."/>
            <person name="Madan Babu M."/>
            <person name="Saito T."/>
            <person name="Buchrieser C."/>
            <person name="Wardroper A."/>
            <person name="Felder M."/>
            <person name="Thangavelu M."/>
            <person name="Johnson D."/>
            <person name="Knights A."/>
            <person name="Loulseged H."/>
            <person name="Mungall K.L."/>
            <person name="Oliver K."/>
            <person name="Price C."/>
            <person name="Quail M.A."/>
            <person name="Urushihara H."/>
            <person name="Hernandez J."/>
            <person name="Rabbinowitsch E."/>
            <person name="Steffen D."/>
            <person name="Sanders M."/>
            <person name="Ma J."/>
            <person name="Kohara Y."/>
            <person name="Sharp S."/>
            <person name="Simmonds M.N."/>
            <person name="Spiegler S."/>
            <person name="Tivey A."/>
            <person name="Sugano S."/>
            <person name="White B."/>
            <person name="Walker D."/>
            <person name="Woodward J.R."/>
            <person name="Winckler T."/>
            <person name="Tanaka Y."/>
            <person name="Shaulsky G."/>
            <person name="Schleicher M."/>
            <person name="Weinstock G.M."/>
            <person name="Rosenthal A."/>
            <person name="Cox E.C."/>
            <person name="Chisholm R.L."/>
            <person name="Gibbs R.A."/>
            <person name="Loomis W.F."/>
            <person name="Platzer M."/>
            <person name="Kay R.R."/>
            <person name="Williams J.G."/>
            <person name="Dear P.H."/>
            <person name="Noegel A.A."/>
            <person name="Barrell B.G."/>
            <person name="Kuspa A."/>
        </authorList>
    </citation>
    <scope>NUCLEOTIDE SEQUENCE [LARGE SCALE GENOMIC DNA]</scope>
    <source>
        <strain>AX4</strain>
    </source>
</reference>